<reference key="1">
    <citation type="journal article" date="2002" name="Lancet">
        <title>Genome and virulence determinants of high virulence community-acquired MRSA.</title>
        <authorList>
            <person name="Baba T."/>
            <person name="Takeuchi F."/>
            <person name="Kuroda M."/>
            <person name="Yuzawa H."/>
            <person name="Aoki K."/>
            <person name="Oguchi A."/>
            <person name="Nagai Y."/>
            <person name="Iwama N."/>
            <person name="Asano K."/>
            <person name="Naimi T."/>
            <person name="Kuroda H."/>
            <person name="Cui L."/>
            <person name="Yamamoto K."/>
            <person name="Hiramatsu K."/>
        </authorList>
    </citation>
    <scope>NUCLEOTIDE SEQUENCE [LARGE SCALE GENOMIC DNA]</scope>
    <source>
        <strain>MW2</strain>
    </source>
</reference>
<proteinExistence type="inferred from homology"/>
<accession>Q8NW24</accession>
<keyword id="KW-0032">Aminotransferase</keyword>
<keyword id="KW-0663">Pyridoxal phosphate</keyword>
<keyword id="KW-0808">Transferase</keyword>
<gene>
    <name type="primary">dat</name>
    <name type="ordered locus">MW1693</name>
</gene>
<evidence type="ECO:0000250" key="1"/>
<evidence type="ECO:0000250" key="2">
    <source>
        <dbReference type="UniProtKB" id="P19938"/>
    </source>
</evidence>
<evidence type="ECO:0000305" key="3"/>
<protein>
    <recommendedName>
        <fullName>D-alanine aminotransferase</fullName>
        <ecNumber>2.6.1.21</ecNumber>
    </recommendedName>
    <alternativeName>
        <fullName>D-amino acid aminotransferase</fullName>
    </alternativeName>
    <alternativeName>
        <fullName>D-amino acid transaminase</fullName>
        <shortName>DAAT</shortName>
    </alternativeName>
    <alternativeName>
        <fullName>D-aspartate aminotransferase</fullName>
    </alternativeName>
</protein>
<dbReference type="EC" id="2.6.1.21"/>
<dbReference type="EMBL" id="BA000033">
    <property type="protein sequence ID" value="BAB95558.1"/>
    <property type="molecule type" value="Genomic_DNA"/>
</dbReference>
<dbReference type="RefSeq" id="WP_000411087.1">
    <property type="nucleotide sequence ID" value="NC_003923.1"/>
</dbReference>
<dbReference type="SMR" id="Q8NW24"/>
<dbReference type="KEGG" id="sam:MW1693"/>
<dbReference type="HOGENOM" id="CLU_020844_4_1_9"/>
<dbReference type="GO" id="GO:0005829">
    <property type="term" value="C:cytosol"/>
    <property type="evidence" value="ECO:0007669"/>
    <property type="project" value="TreeGrafter"/>
</dbReference>
<dbReference type="GO" id="GO:0047810">
    <property type="term" value="F:D-alanine-2-oxoglutarate aminotransferase activity"/>
    <property type="evidence" value="ECO:0000250"/>
    <property type="project" value="UniProtKB"/>
</dbReference>
<dbReference type="GO" id="GO:0030170">
    <property type="term" value="F:pyridoxal phosphate binding"/>
    <property type="evidence" value="ECO:0000250"/>
    <property type="project" value="UniProtKB"/>
</dbReference>
<dbReference type="GO" id="GO:0046437">
    <property type="term" value="P:D-amino acid biosynthetic process"/>
    <property type="evidence" value="ECO:0000250"/>
    <property type="project" value="UniProtKB"/>
</dbReference>
<dbReference type="GO" id="GO:0019478">
    <property type="term" value="P:D-amino acid catabolic process"/>
    <property type="evidence" value="ECO:0000250"/>
    <property type="project" value="UniProtKB"/>
</dbReference>
<dbReference type="CDD" id="cd01558">
    <property type="entry name" value="D-AAT_like"/>
    <property type="match status" value="1"/>
</dbReference>
<dbReference type="FunFam" id="3.20.10.10:FF:000002">
    <property type="entry name" value="D-alanine aminotransferase"/>
    <property type="match status" value="1"/>
</dbReference>
<dbReference type="FunFam" id="3.30.470.10:FF:000009">
    <property type="entry name" value="D-alanine aminotransferase"/>
    <property type="match status" value="1"/>
</dbReference>
<dbReference type="Gene3D" id="3.30.470.10">
    <property type="match status" value="1"/>
</dbReference>
<dbReference type="Gene3D" id="3.20.10.10">
    <property type="entry name" value="D-amino Acid Aminotransferase, subunit A, domain 2"/>
    <property type="match status" value="1"/>
</dbReference>
<dbReference type="InterPro" id="IPR001544">
    <property type="entry name" value="Aminotrans_IV"/>
</dbReference>
<dbReference type="InterPro" id="IPR018300">
    <property type="entry name" value="Aminotrans_IV_CS"/>
</dbReference>
<dbReference type="InterPro" id="IPR036038">
    <property type="entry name" value="Aminotransferase-like"/>
</dbReference>
<dbReference type="InterPro" id="IPR043132">
    <property type="entry name" value="BCAT-like_C"/>
</dbReference>
<dbReference type="InterPro" id="IPR043131">
    <property type="entry name" value="BCAT-like_N"/>
</dbReference>
<dbReference type="InterPro" id="IPR050571">
    <property type="entry name" value="Class-IV_PLP-Dep_Aminotrnsfr"/>
</dbReference>
<dbReference type="InterPro" id="IPR005784">
    <property type="entry name" value="D_amino_transT"/>
</dbReference>
<dbReference type="NCBIfam" id="TIGR01121">
    <property type="entry name" value="D_amino_aminoT"/>
    <property type="match status" value="1"/>
</dbReference>
<dbReference type="PANTHER" id="PTHR42743">
    <property type="entry name" value="AMINO-ACID AMINOTRANSFERASE"/>
    <property type="match status" value="1"/>
</dbReference>
<dbReference type="PANTHER" id="PTHR42743:SF10">
    <property type="entry name" value="D-ALANINE AMINOTRANSFERASE"/>
    <property type="match status" value="1"/>
</dbReference>
<dbReference type="Pfam" id="PF01063">
    <property type="entry name" value="Aminotran_4"/>
    <property type="match status" value="1"/>
</dbReference>
<dbReference type="SUPFAM" id="SSF56752">
    <property type="entry name" value="D-aminoacid aminotransferase-like PLP-dependent enzymes"/>
    <property type="match status" value="1"/>
</dbReference>
<dbReference type="PROSITE" id="PS00770">
    <property type="entry name" value="AA_TRANSFER_CLASS_4"/>
    <property type="match status" value="1"/>
</dbReference>
<sequence length="282" mass="31922">MEKIFLNGEFVSPSEAKVSYNDRGYVFGDGIYEYIRVYNGKLFTVTEHYERFLRSANEIGLDLNYSVEELIELSRKLVDMNQIETGAIYIQATRGVAERNHSFPTPEVEPAIVAYTKSYDRPYDHLENGVNGVTVEDIRWLRCDIKSLNLLGNVLAKEYAVKYNAVEAIQHRGETVTEGSSSNAYAIKDGVIYTHPINNYILNGITRIVIKKIAEDYNIPFKEETFTVDFLRNADEVIVSSTSAEVTPVIKLDGEPVNDGKVGPITRQLQEGFEKYIESHSI</sequence>
<name>DAAA_STAAW</name>
<comment type="function">
    <text evidence="1">Acts on the D-isomers of alanine, leucine, aspartate, glutamate, aminobutyrate, norvaline and asparagine. The enzyme transfers an amino group from a substrate D-amino acid to the pyridoxal phosphate cofactor to form pyridoxamine and an alpha-keto acid in the first half-reaction. The second half-reaction is the reverse of the first, transferring the amino group from the pyridoxamine to a second alpha-keto acid to form the product D-amino acid via a ping-pong mechanism. This is an important process in the formation of D-alanine and D-glutamate, which are essential bacterial cell wall components (By similarity).</text>
</comment>
<comment type="catalytic activity">
    <reaction>
        <text>D-alanine + 2-oxoglutarate = D-glutamate + pyruvate</text>
        <dbReference type="Rhea" id="RHEA:15869"/>
        <dbReference type="ChEBI" id="CHEBI:15361"/>
        <dbReference type="ChEBI" id="CHEBI:16810"/>
        <dbReference type="ChEBI" id="CHEBI:29986"/>
        <dbReference type="ChEBI" id="CHEBI:57416"/>
        <dbReference type="EC" id="2.6.1.21"/>
    </reaction>
</comment>
<comment type="cofactor">
    <cofactor evidence="1">
        <name>pyridoxal 5'-phosphate</name>
        <dbReference type="ChEBI" id="CHEBI:597326"/>
    </cofactor>
</comment>
<comment type="subunit">
    <text evidence="1">Homodimer.</text>
</comment>
<comment type="similarity">
    <text evidence="3">Belongs to the class-IV pyridoxal-phosphate-dependent aminotransferase family.</text>
</comment>
<organism>
    <name type="scientific">Staphylococcus aureus (strain MW2)</name>
    <dbReference type="NCBI Taxonomy" id="196620"/>
    <lineage>
        <taxon>Bacteria</taxon>
        <taxon>Bacillati</taxon>
        <taxon>Bacillota</taxon>
        <taxon>Bacilli</taxon>
        <taxon>Bacillales</taxon>
        <taxon>Staphylococcaceae</taxon>
        <taxon>Staphylococcus</taxon>
    </lineage>
</organism>
<feature type="chain" id="PRO_0000103258" description="D-alanine aminotransferase">
    <location>
        <begin position="1"/>
        <end position="282"/>
    </location>
</feature>
<feature type="active site" description="Proton acceptor" evidence="2">
    <location>
        <position position="146"/>
    </location>
</feature>
<feature type="binding site" evidence="2">
    <location>
        <position position="32"/>
    </location>
    <ligand>
        <name>substrate</name>
    </ligand>
</feature>
<feature type="binding site" evidence="2">
    <location>
        <position position="51"/>
    </location>
    <ligand>
        <name>pyridoxal 5'-phosphate</name>
        <dbReference type="ChEBI" id="CHEBI:597326"/>
    </ligand>
</feature>
<feature type="binding site" evidence="2">
    <location>
        <position position="99"/>
    </location>
    <ligand>
        <name>substrate</name>
    </ligand>
</feature>
<feature type="binding site" evidence="2">
    <location>
        <position position="101"/>
    </location>
    <ligand>
        <name>substrate</name>
    </ligand>
</feature>
<feature type="binding site" evidence="2">
    <location>
        <position position="178"/>
    </location>
    <ligand>
        <name>pyridoxal 5'-phosphate</name>
        <dbReference type="ChEBI" id="CHEBI:597326"/>
    </ligand>
</feature>
<feature type="modified residue" description="N6-(pyridoxal phosphate)lysine" evidence="2">
    <location>
        <position position="146"/>
    </location>
</feature>